<organism>
    <name type="scientific">Influenza A virus (strain A/Chicken/Scotland/1959 H5N1)</name>
    <dbReference type="NCBI Taxonomy" id="402527"/>
    <lineage>
        <taxon>Viruses</taxon>
        <taxon>Riboviria</taxon>
        <taxon>Orthornavirae</taxon>
        <taxon>Negarnaviricota</taxon>
        <taxon>Polyploviricotina</taxon>
        <taxon>Insthoviricetes</taxon>
        <taxon>Articulavirales</taxon>
        <taxon>Orthomyxoviridae</taxon>
        <taxon>Alphainfluenzavirus</taxon>
        <taxon>Alphainfluenzavirus influenzae</taxon>
        <taxon>Influenza A virus</taxon>
    </lineage>
</organism>
<sequence>MDSNTVSSFQDILMRMSKMQLGSSSEDLNGMITQFESLKLYRDSLGEAVMRMGDLHSLQSRNGKWREQLSQKFEEIRWLIEEVRHRLKITENSFEQITFMQALQLLLEVEQEIRTFSFQLI</sequence>
<protein>
    <recommendedName>
        <fullName evidence="1">Nuclear export protein</fullName>
        <shortName evidence="1">NEP</shortName>
    </recommendedName>
    <alternativeName>
        <fullName evidence="1">Non-structural protein 2</fullName>
        <shortName evidence="1">NS2</shortName>
    </alternativeName>
</protein>
<dbReference type="EMBL" id="CY015085">
    <property type="protein sequence ID" value="ABI85112.1"/>
    <property type="molecule type" value="Genomic_RNA"/>
</dbReference>
<dbReference type="SMR" id="Q0A2H1"/>
<dbReference type="IntAct" id="Q0A2H1">
    <property type="interactions" value="41"/>
</dbReference>
<dbReference type="MINT" id="Q0A2H1"/>
<dbReference type="Proteomes" id="UP000169634">
    <property type="component" value="Genome"/>
</dbReference>
<dbReference type="GO" id="GO:0042025">
    <property type="term" value="C:host cell nucleus"/>
    <property type="evidence" value="ECO:0007669"/>
    <property type="project" value="UniProtKB-SubCell"/>
</dbReference>
<dbReference type="GO" id="GO:0044423">
    <property type="term" value="C:virion component"/>
    <property type="evidence" value="ECO:0007669"/>
    <property type="project" value="UniProtKB-UniRule"/>
</dbReference>
<dbReference type="GO" id="GO:0039675">
    <property type="term" value="P:exit of virus from host cell nucleus through nuclear pore"/>
    <property type="evidence" value="ECO:0007669"/>
    <property type="project" value="UniProtKB-UniRule"/>
</dbReference>
<dbReference type="Gene3D" id="1.10.287.230">
    <property type="match status" value="1"/>
</dbReference>
<dbReference type="Gene3D" id="1.10.287.10">
    <property type="entry name" value="S15/NS1, RNA-binding"/>
    <property type="match status" value="1"/>
</dbReference>
<dbReference type="HAMAP" id="MF_04067">
    <property type="entry name" value="INFV_NEP"/>
    <property type="match status" value="1"/>
</dbReference>
<dbReference type="InterPro" id="IPR000968">
    <property type="entry name" value="Flu_NS2"/>
</dbReference>
<dbReference type="Pfam" id="PF00601">
    <property type="entry name" value="Flu_NS2"/>
    <property type="match status" value="1"/>
</dbReference>
<dbReference type="SUPFAM" id="SSF101156">
    <property type="entry name" value="Nonstructural protein ns2, Nep, M1-binding domain"/>
    <property type="match status" value="1"/>
</dbReference>
<name>NEP_I59A0</name>
<proteinExistence type="inferred from homology"/>
<reference key="1">
    <citation type="journal article" date="2006" name="Science">
        <title>Large-scale sequence analysis of avian influenza isolates.</title>
        <authorList>
            <person name="Obenauer J.C."/>
            <person name="Denson J."/>
            <person name="Mehta P.K."/>
            <person name="Su X."/>
            <person name="Mukatira S."/>
            <person name="Finkelstein D.B."/>
            <person name="Xu X."/>
            <person name="Wang J."/>
            <person name="Ma J."/>
            <person name="Fan Y."/>
            <person name="Rakestraw K.M."/>
            <person name="Webster R.G."/>
            <person name="Hoffmann E."/>
            <person name="Krauss S."/>
            <person name="Zheng J."/>
            <person name="Zhang Z."/>
            <person name="Naeve C.W."/>
        </authorList>
    </citation>
    <scope>NUCLEOTIDE SEQUENCE [GENOMIC RNA]</scope>
</reference>
<keyword id="KW-0025">Alternative splicing</keyword>
<keyword id="KW-1048">Host nucleus</keyword>
<keyword id="KW-0945">Host-virus interaction</keyword>
<keyword id="KW-0813">Transport</keyword>
<keyword id="KW-0946">Virion</keyword>
<organismHost>
    <name type="scientific">Aves</name>
    <dbReference type="NCBI Taxonomy" id="8782"/>
</organismHost>
<organismHost>
    <name type="scientific">Felis catus</name>
    <name type="common">Cat</name>
    <name type="synonym">Felis silvestris catus</name>
    <dbReference type="NCBI Taxonomy" id="9685"/>
</organismHost>
<organismHost>
    <name type="scientific">Homo sapiens</name>
    <name type="common">Human</name>
    <dbReference type="NCBI Taxonomy" id="9606"/>
</organismHost>
<organismHost>
    <name type="scientific">Panthera pardus</name>
    <name type="common">Leopard</name>
    <name type="synonym">Felis pardus</name>
    <dbReference type="NCBI Taxonomy" id="9691"/>
</organismHost>
<organismHost>
    <name type="scientific">Panthera tigris</name>
    <name type="common">Tiger</name>
    <dbReference type="NCBI Taxonomy" id="9694"/>
</organismHost>
<organismHost>
    <name type="scientific">Sus scrofa</name>
    <name type="common">Pig</name>
    <dbReference type="NCBI Taxonomy" id="9823"/>
</organismHost>
<accession>Q0A2H1</accession>
<feature type="chain" id="PRO_0000309850" description="Nuclear export protein">
    <location>
        <begin position="1"/>
        <end position="121"/>
    </location>
</feature>
<feature type="short sequence motif" description="Nuclear export signal" evidence="1">
    <location>
        <begin position="12"/>
        <end position="21"/>
    </location>
</feature>
<feature type="short sequence motif" description="Nuclear export signal" evidence="1">
    <location>
        <begin position="85"/>
        <end position="94"/>
    </location>
</feature>
<comment type="function">
    <text evidence="1">Mediates the nuclear export of encapsidated genomic RNAs (ribonucleoproteins, RNPs). Acts as an adapter between viral RNPs complexes and the nuclear export machinery of the cell. Possesses no intrinsic RNA-binding activity, but includes a C-terminal M1-binding domain. This domain is believed to allow recognition of RNPs bound to the protein M1. Since protein M1 is not available in large quantities before late stages of infection, such an indirect recognition mechanism probably ensures that genomic RNPs are not exported from the host nucleus until sufficient quantities of viral mRNA and progeny genomic RNA have been synthesized. Furthermore, the RNPs enter the host cytoplasm only when associated with the M1 protein that is necessary to guide them to the plasma membrane. May down-regulate viral RNA synthesis when overproduced.</text>
</comment>
<comment type="subunit">
    <text evidence="1">Interacts with protein M1. May interact with host nucleoporin RAB/HRB and exportin XPO1/CRM1.</text>
</comment>
<comment type="subcellular location">
    <subcellularLocation>
        <location evidence="1">Virion</location>
    </subcellularLocation>
    <subcellularLocation>
        <location evidence="1">Host nucleus</location>
    </subcellularLocation>
</comment>
<comment type="alternative products">
    <event type="alternative splicing"/>
    <isoform>
        <id>Q0A2H1-1</id>
        <name>NEP</name>
        <name>NS2</name>
        <sequence type="displayed"/>
    </isoform>
    <isoform>
        <id>Q0A2H0-1</id>
        <name>NS1</name>
        <sequence type="external"/>
    </isoform>
</comment>
<comment type="miscellaneous">
    <text>Average number present in a viral particle is estimated to be 130-200 molecules.</text>
</comment>
<comment type="similarity">
    <text evidence="1">Belongs to the influenza viruses NEP family.</text>
</comment>
<evidence type="ECO:0000255" key="1">
    <source>
        <dbReference type="HAMAP-Rule" id="MF_04067"/>
    </source>
</evidence>
<gene>
    <name evidence="1" type="primary">NS</name>
</gene>